<proteinExistence type="inferred from homology"/>
<dbReference type="EMBL" id="D16822">
    <property type="protein sequence ID" value="BAA04101.1"/>
    <property type="molecule type" value="Genomic_DNA"/>
</dbReference>
<dbReference type="EMBL" id="AP012320">
    <property type="protein sequence ID" value="BAL96701.1"/>
    <property type="molecule type" value="Genomic_DNA"/>
</dbReference>
<dbReference type="PIR" id="F49964">
    <property type="entry name" value="F49964"/>
</dbReference>
<dbReference type="PIR" id="T50890">
    <property type="entry name" value="T50890"/>
</dbReference>
<dbReference type="RefSeq" id="WP_014429562.1">
    <property type="nucleotide sequence ID" value="NC_017075.1"/>
</dbReference>
<dbReference type="SMR" id="P51761"/>
<dbReference type="STRING" id="983917.RGE_33620"/>
<dbReference type="KEGG" id="rge:RGE_33620"/>
<dbReference type="PATRIC" id="fig|983917.3.peg.3289"/>
<dbReference type="eggNOG" id="ENOG502Z87P">
    <property type="taxonomic scope" value="Bacteria"/>
</dbReference>
<dbReference type="HOGENOM" id="CLU_078782_0_0_4"/>
<dbReference type="Proteomes" id="UP000007883">
    <property type="component" value="Chromosome"/>
</dbReference>
<dbReference type="GO" id="GO:0005886">
    <property type="term" value="C:plasma membrane"/>
    <property type="evidence" value="ECO:0007669"/>
    <property type="project" value="UniProtKB-SubCell"/>
</dbReference>
<dbReference type="GO" id="GO:0030077">
    <property type="term" value="C:plasma membrane light-harvesting complex"/>
    <property type="evidence" value="ECO:0007669"/>
    <property type="project" value="InterPro"/>
</dbReference>
<dbReference type="GO" id="GO:0042314">
    <property type="term" value="F:bacteriochlorophyll binding"/>
    <property type="evidence" value="ECO:0007669"/>
    <property type="project" value="UniProtKB-KW"/>
</dbReference>
<dbReference type="GO" id="GO:0045156">
    <property type="term" value="F:electron transporter, transferring electrons within the cyclic electron transport pathway of photosynthesis activity"/>
    <property type="evidence" value="ECO:0007669"/>
    <property type="project" value="InterPro"/>
</dbReference>
<dbReference type="GO" id="GO:0046872">
    <property type="term" value="F:metal ion binding"/>
    <property type="evidence" value="ECO:0007669"/>
    <property type="project" value="UniProtKB-KW"/>
</dbReference>
<dbReference type="GO" id="GO:0009772">
    <property type="term" value="P:photosynthetic electron transport in photosystem II"/>
    <property type="evidence" value="ECO:0007669"/>
    <property type="project" value="InterPro"/>
</dbReference>
<dbReference type="CDD" id="cd09291">
    <property type="entry name" value="Photo-RC_M"/>
    <property type="match status" value="1"/>
</dbReference>
<dbReference type="Gene3D" id="1.20.85.10">
    <property type="entry name" value="Photosystem II protein D1-like"/>
    <property type="match status" value="2"/>
</dbReference>
<dbReference type="InterPro" id="IPR036854">
    <property type="entry name" value="Photo_II_D1/D2_sf"/>
</dbReference>
<dbReference type="InterPro" id="IPR000484">
    <property type="entry name" value="Photo_RC_L/M"/>
</dbReference>
<dbReference type="InterPro" id="IPR055265">
    <property type="entry name" value="Photo_RC_L/M_CS"/>
</dbReference>
<dbReference type="InterPro" id="IPR005781">
    <property type="entry name" value="Photo_RC_M"/>
</dbReference>
<dbReference type="NCBIfam" id="TIGR01115">
    <property type="entry name" value="pufM"/>
    <property type="match status" value="1"/>
</dbReference>
<dbReference type="Pfam" id="PF00124">
    <property type="entry name" value="Photo_RC"/>
    <property type="match status" value="1"/>
</dbReference>
<dbReference type="PRINTS" id="PR00256">
    <property type="entry name" value="REACTNCENTRE"/>
</dbReference>
<dbReference type="SUPFAM" id="SSF81483">
    <property type="entry name" value="Bacterial photosystem II reaction centre, L and M subunits"/>
    <property type="match status" value="1"/>
</dbReference>
<dbReference type="PROSITE" id="PS00244">
    <property type="entry name" value="REACTION_CENTER"/>
    <property type="match status" value="1"/>
</dbReference>
<evidence type="ECO:0000250" key="1"/>
<evidence type="ECO:0000255" key="2"/>
<evidence type="ECO:0000305" key="3"/>
<sequence>MAEYQNIFTRVQVAGPAHMGVPLPEQDSPRTGKKPWQIHLLGRLGMAQIGPIYLGPLGILSIVFGSLAIMIIGFNMLASVGWNPIEFFRQFFWLALEPPSPKYGLKLPPLNDGGWWLMAGLFLTISILLWWVRMYTRARALGMGTHVAWAFAAAIWLYLVLGFIRPVLMGSWSEAVPFGIFPHLDWTAAFSLRYGNLFYNPFHALSIAFLYGATLLFAMHGATILAVSRFGGERELEQIADRGTASERAQLFWRWTMGFNATTESIHRWAWWFAVLCPLCGGIGILLSGTVVDNWYLWAVKHGVAPSYPAVFAPTIDPATLQGVK</sequence>
<feature type="initiator methionine" description="Removed" evidence="1">
    <location>
        <position position="1"/>
    </location>
</feature>
<feature type="chain" id="PRO_0000090415" description="Reaction center protein M chain">
    <location>
        <begin position="2"/>
        <end position="325"/>
    </location>
</feature>
<feature type="transmembrane region" description="Helical" evidence="2">
    <location>
        <begin position="54"/>
        <end position="80"/>
    </location>
</feature>
<feature type="transmembrane region" description="Helical" evidence="2">
    <location>
        <begin position="111"/>
        <end position="140"/>
    </location>
</feature>
<feature type="transmembrane region" description="Helical" evidence="2">
    <location>
        <begin position="143"/>
        <end position="168"/>
    </location>
</feature>
<feature type="transmembrane region" description="Helical" evidence="2">
    <location>
        <begin position="198"/>
        <end position="226"/>
    </location>
</feature>
<feature type="transmembrane region" description="Helical" evidence="2">
    <location>
        <begin position="260"/>
        <end position="286"/>
    </location>
</feature>
<feature type="binding site" description="axial binding residue" evidence="1">
    <location>
        <position position="183"/>
    </location>
    <ligand>
        <name>(7R,8Z)-bacteriochlorophyll b</name>
        <dbReference type="ChEBI" id="CHEBI:30034"/>
    </ligand>
    <ligandPart>
        <name>Mg</name>
        <dbReference type="ChEBI" id="CHEBI:25107"/>
    </ligandPart>
</feature>
<feature type="binding site" description="axial binding residue" evidence="1">
    <location>
        <position position="203"/>
    </location>
    <ligand>
        <name>(7R,8Z)-bacteriochlorophyll b</name>
        <dbReference type="ChEBI" id="CHEBI:30034"/>
    </ligand>
    <ligandPart>
        <name>Mg</name>
        <dbReference type="ChEBI" id="CHEBI:25107"/>
    </ligandPart>
</feature>
<feature type="binding site" evidence="1">
    <location>
        <position position="220"/>
    </location>
    <ligand>
        <name>Fe cation</name>
        <dbReference type="ChEBI" id="CHEBI:24875"/>
    </ligand>
</feature>
<feature type="binding site" evidence="1">
    <location>
        <position position="235"/>
    </location>
    <ligand>
        <name>Fe cation</name>
        <dbReference type="ChEBI" id="CHEBI:24875"/>
    </ligand>
</feature>
<feature type="binding site" evidence="1">
    <location>
        <position position="253"/>
    </location>
    <ligand>
        <name>a ubiquinone</name>
        <dbReference type="ChEBI" id="CHEBI:16389"/>
    </ligand>
</feature>
<feature type="binding site" evidence="1">
    <location>
        <position position="267"/>
    </location>
    <ligand>
        <name>Fe cation</name>
        <dbReference type="ChEBI" id="CHEBI:24875"/>
    </ligand>
</feature>
<name>RCEM_RUBGI</name>
<keyword id="KW-0076">Bacteriochlorophyll</keyword>
<keyword id="KW-0997">Cell inner membrane</keyword>
<keyword id="KW-1003">Cell membrane</keyword>
<keyword id="KW-0148">Chlorophyll</keyword>
<keyword id="KW-0157">Chromophore</keyword>
<keyword id="KW-0249">Electron transport</keyword>
<keyword id="KW-0408">Iron</keyword>
<keyword id="KW-0460">Magnesium</keyword>
<keyword id="KW-0472">Membrane</keyword>
<keyword id="KW-0479">Metal-binding</keyword>
<keyword id="KW-0602">Photosynthesis</keyword>
<keyword id="KW-0674">Reaction center</keyword>
<keyword id="KW-1185">Reference proteome</keyword>
<keyword id="KW-0812">Transmembrane</keyword>
<keyword id="KW-1133">Transmembrane helix</keyword>
<keyword id="KW-0813">Transport</keyword>
<comment type="function">
    <text>The reaction center is a membrane-bound complex that mediates the initial photochemical event in the electron transfer process of photosynthesis.</text>
</comment>
<comment type="subunit">
    <text>Reaction center is composed of four bacteriochlorophylls, two bacteriopheophytins, two ubiquinones, one iron, and three highly hydrophobic polypeptide chains (designated L, M, and H).</text>
</comment>
<comment type="subcellular location">
    <subcellularLocation>
        <location evidence="1">Cell inner membrane</location>
        <topology evidence="1">Multi-pass membrane protein</topology>
    </subcellularLocation>
</comment>
<comment type="similarity">
    <text evidence="3">Belongs to the reaction center PufL/M/PsbA/D family.</text>
</comment>
<accession>P51761</accession>
<accession>I0HUL4</accession>
<protein>
    <recommendedName>
        <fullName>Reaction center protein M chain</fullName>
    </recommendedName>
    <alternativeName>
        <fullName>Photosynthetic reaction center M subunit</fullName>
    </alternativeName>
</protein>
<organism>
    <name type="scientific">Rubrivivax gelatinosus (strain NBRC 100245 / IL144)</name>
    <dbReference type="NCBI Taxonomy" id="983917"/>
    <lineage>
        <taxon>Bacteria</taxon>
        <taxon>Pseudomonadati</taxon>
        <taxon>Pseudomonadota</taxon>
        <taxon>Betaproteobacteria</taxon>
        <taxon>Burkholderiales</taxon>
        <taxon>Sphaerotilaceae</taxon>
        <taxon>Rubrivivax</taxon>
    </lineage>
</organism>
<reference key="1">
    <citation type="journal article" date="1994" name="J. Biol. Chem.">
        <title>Primary structure and transcription of genes encoding B870 and photosynthetic reaction center apoproteins from Rubrivivax gelatinosus.</title>
        <authorList>
            <person name="Nagashima K.V.P."/>
            <person name="Matsuura K."/>
            <person name="Ohyama S."/>
            <person name="Shimada K."/>
        </authorList>
    </citation>
    <scope>NUCLEOTIDE SEQUENCE [GENOMIC DNA]</scope>
    <source>
        <strain>NBRC 100245 / IL144</strain>
    </source>
</reference>
<reference key="2">
    <citation type="journal article" date="2012" name="J. Bacteriol.">
        <title>Complete genome sequence of phototrophic betaproteobacterium Rubrivivax gelatinosus IL144.</title>
        <authorList>
            <person name="Nagashima S."/>
            <person name="Kamimura A."/>
            <person name="Shimizu T."/>
            <person name="Nakamura-Isaki S."/>
            <person name="Aono E."/>
            <person name="Sakamoto K."/>
            <person name="Ichikawa N."/>
            <person name="Nakazawa H."/>
            <person name="Sekine M."/>
            <person name="Yamazaki S."/>
            <person name="Fujita N."/>
            <person name="Shimada K."/>
            <person name="Hanada S."/>
            <person name="Nagashima K.V."/>
        </authorList>
    </citation>
    <scope>NUCLEOTIDE SEQUENCE [LARGE SCALE GENOMIC DNA]</scope>
    <source>
        <strain>NBRC 100245 / IL144</strain>
    </source>
</reference>
<gene>
    <name type="primary">pufM</name>
    <name type="ordered locus">RGE_33620</name>
</gene>